<comment type="function">
    <text evidence="1">The glycine cleavage system catalyzes the degradation of glycine.</text>
</comment>
<comment type="catalytic activity">
    <reaction evidence="1">
        <text>N(6)-[(R)-S(8)-aminomethyldihydrolipoyl]-L-lysyl-[protein] + (6S)-5,6,7,8-tetrahydrofolate = N(6)-[(R)-dihydrolipoyl]-L-lysyl-[protein] + (6R)-5,10-methylene-5,6,7,8-tetrahydrofolate + NH4(+)</text>
        <dbReference type="Rhea" id="RHEA:16945"/>
        <dbReference type="Rhea" id="RHEA-COMP:10475"/>
        <dbReference type="Rhea" id="RHEA-COMP:10492"/>
        <dbReference type="ChEBI" id="CHEBI:15636"/>
        <dbReference type="ChEBI" id="CHEBI:28938"/>
        <dbReference type="ChEBI" id="CHEBI:57453"/>
        <dbReference type="ChEBI" id="CHEBI:83100"/>
        <dbReference type="ChEBI" id="CHEBI:83143"/>
        <dbReference type="EC" id="2.1.2.10"/>
    </reaction>
</comment>
<comment type="subunit">
    <text evidence="1">The glycine cleavage system is composed of four proteins: P, T, L and H.</text>
</comment>
<comment type="similarity">
    <text evidence="1">Belongs to the GcvT family.</text>
</comment>
<gene>
    <name evidence="1" type="primary">gcvT</name>
    <name type="ordered locus">Tlet_1959</name>
</gene>
<protein>
    <recommendedName>
        <fullName evidence="1">Aminomethyltransferase</fullName>
        <ecNumber evidence="1">2.1.2.10</ecNumber>
    </recommendedName>
    <alternativeName>
        <fullName evidence="1">Glycine cleavage system T protein</fullName>
    </alternativeName>
</protein>
<accession>A8F8M9</accession>
<dbReference type="EC" id="2.1.2.10" evidence="1"/>
<dbReference type="EMBL" id="CP000812">
    <property type="protein sequence ID" value="ABV34513.1"/>
    <property type="molecule type" value="Genomic_DNA"/>
</dbReference>
<dbReference type="RefSeq" id="WP_012003989.1">
    <property type="nucleotide sequence ID" value="NZ_BSDV01000001.1"/>
</dbReference>
<dbReference type="SMR" id="A8F8M9"/>
<dbReference type="STRING" id="416591.Tlet_1959"/>
<dbReference type="KEGG" id="tle:Tlet_1959"/>
<dbReference type="eggNOG" id="COG0404">
    <property type="taxonomic scope" value="Bacteria"/>
</dbReference>
<dbReference type="HOGENOM" id="CLU_007884_10_2_0"/>
<dbReference type="OrthoDB" id="9774591at2"/>
<dbReference type="Proteomes" id="UP000002016">
    <property type="component" value="Chromosome"/>
</dbReference>
<dbReference type="GO" id="GO:0005829">
    <property type="term" value="C:cytosol"/>
    <property type="evidence" value="ECO:0007669"/>
    <property type="project" value="TreeGrafter"/>
</dbReference>
<dbReference type="GO" id="GO:0005960">
    <property type="term" value="C:glycine cleavage complex"/>
    <property type="evidence" value="ECO:0007669"/>
    <property type="project" value="InterPro"/>
</dbReference>
<dbReference type="GO" id="GO:0004047">
    <property type="term" value="F:aminomethyltransferase activity"/>
    <property type="evidence" value="ECO:0007669"/>
    <property type="project" value="UniProtKB-UniRule"/>
</dbReference>
<dbReference type="GO" id="GO:0008483">
    <property type="term" value="F:transaminase activity"/>
    <property type="evidence" value="ECO:0007669"/>
    <property type="project" value="UniProtKB-KW"/>
</dbReference>
<dbReference type="GO" id="GO:0019464">
    <property type="term" value="P:glycine decarboxylation via glycine cleavage system"/>
    <property type="evidence" value="ECO:0007669"/>
    <property type="project" value="UniProtKB-UniRule"/>
</dbReference>
<dbReference type="FunFam" id="2.40.30.110:FF:000003">
    <property type="entry name" value="Aminomethyltransferase"/>
    <property type="match status" value="1"/>
</dbReference>
<dbReference type="FunFam" id="3.30.70.1400:FF:000001">
    <property type="entry name" value="Aminomethyltransferase"/>
    <property type="match status" value="1"/>
</dbReference>
<dbReference type="FunFam" id="4.10.1250.10:FF:000001">
    <property type="entry name" value="Aminomethyltransferase"/>
    <property type="match status" value="1"/>
</dbReference>
<dbReference type="Gene3D" id="2.40.30.110">
    <property type="entry name" value="Aminomethyltransferase beta-barrel domains"/>
    <property type="match status" value="1"/>
</dbReference>
<dbReference type="Gene3D" id="3.30.70.1400">
    <property type="entry name" value="Aminomethyltransferase beta-barrel domains"/>
    <property type="match status" value="1"/>
</dbReference>
<dbReference type="Gene3D" id="4.10.1250.10">
    <property type="entry name" value="Aminomethyltransferase fragment"/>
    <property type="match status" value="1"/>
</dbReference>
<dbReference type="Gene3D" id="3.30.1360.120">
    <property type="entry name" value="Probable tRNA modification gtpase trme, domain 1"/>
    <property type="match status" value="1"/>
</dbReference>
<dbReference type="HAMAP" id="MF_00259">
    <property type="entry name" value="GcvT"/>
    <property type="match status" value="1"/>
</dbReference>
<dbReference type="InterPro" id="IPR006223">
    <property type="entry name" value="GCS_T"/>
</dbReference>
<dbReference type="InterPro" id="IPR022903">
    <property type="entry name" value="GCS_T_bac"/>
</dbReference>
<dbReference type="InterPro" id="IPR013977">
    <property type="entry name" value="GCST_C"/>
</dbReference>
<dbReference type="InterPro" id="IPR006222">
    <property type="entry name" value="GCV_T_N"/>
</dbReference>
<dbReference type="InterPro" id="IPR028896">
    <property type="entry name" value="GcvT/YgfZ/DmdA"/>
</dbReference>
<dbReference type="InterPro" id="IPR029043">
    <property type="entry name" value="GcvT/YgfZ_C"/>
</dbReference>
<dbReference type="InterPro" id="IPR027266">
    <property type="entry name" value="TrmE/GcvT_dom1"/>
</dbReference>
<dbReference type="NCBIfam" id="TIGR00528">
    <property type="entry name" value="gcvT"/>
    <property type="match status" value="1"/>
</dbReference>
<dbReference type="NCBIfam" id="NF001567">
    <property type="entry name" value="PRK00389.1"/>
    <property type="match status" value="1"/>
</dbReference>
<dbReference type="PANTHER" id="PTHR43757">
    <property type="entry name" value="AMINOMETHYLTRANSFERASE"/>
    <property type="match status" value="1"/>
</dbReference>
<dbReference type="PANTHER" id="PTHR43757:SF2">
    <property type="entry name" value="AMINOMETHYLTRANSFERASE, MITOCHONDRIAL"/>
    <property type="match status" value="1"/>
</dbReference>
<dbReference type="Pfam" id="PF01571">
    <property type="entry name" value="GCV_T"/>
    <property type="match status" value="1"/>
</dbReference>
<dbReference type="Pfam" id="PF08669">
    <property type="entry name" value="GCV_T_C"/>
    <property type="match status" value="1"/>
</dbReference>
<dbReference type="PIRSF" id="PIRSF006487">
    <property type="entry name" value="GcvT"/>
    <property type="match status" value="1"/>
</dbReference>
<dbReference type="SUPFAM" id="SSF101790">
    <property type="entry name" value="Aminomethyltransferase beta-barrel domain"/>
    <property type="match status" value="1"/>
</dbReference>
<dbReference type="SUPFAM" id="SSF103025">
    <property type="entry name" value="Folate-binding domain"/>
    <property type="match status" value="1"/>
</dbReference>
<evidence type="ECO:0000255" key="1">
    <source>
        <dbReference type="HAMAP-Rule" id="MF_00259"/>
    </source>
</evidence>
<name>GCST_PSELT</name>
<sequence length="362" mass="40973">MRRTPLYESHVSLGAKMIDFAGWEMPLQYTSINDEVATVRKNVALFDVSHMGEIFVEGEDTVEFVDYLLTNSFKNLRIGQVMYTVMCNEMGGIIDDLLTYRFGEKQAMLVVNAANIEKDFDWIVNQSKQFNVTVRNLSDQYGLIAVQGPLSERFLKTFVSDIDSLSYYTFASYSVFGKNCIVSRTGYTGEDGFEIYCHWDDTFTVWNELLQRGNNFGVKPAGLGARDVCRLEASYMLYGNDMDETTTPLEVGLSWVVKFDKDFIGKDSLIKQKELGLQKRIRGLEISDRRIARHGMYVFKGEKRVGVVTSGTFSPTLEKPVALAMLSSEIKISDEIEVDIRGSKVKAMIVKLPFYRGSVKSS</sequence>
<keyword id="KW-0032">Aminotransferase</keyword>
<keyword id="KW-1185">Reference proteome</keyword>
<keyword id="KW-0808">Transferase</keyword>
<reference key="1">
    <citation type="submission" date="2007-08" db="EMBL/GenBank/DDBJ databases">
        <title>Complete sequence of Thermotoga lettingae TMO.</title>
        <authorList>
            <consortium name="US DOE Joint Genome Institute"/>
            <person name="Copeland A."/>
            <person name="Lucas S."/>
            <person name="Lapidus A."/>
            <person name="Barry K."/>
            <person name="Glavina del Rio T."/>
            <person name="Dalin E."/>
            <person name="Tice H."/>
            <person name="Pitluck S."/>
            <person name="Foster B."/>
            <person name="Bruce D."/>
            <person name="Schmutz J."/>
            <person name="Larimer F."/>
            <person name="Land M."/>
            <person name="Hauser L."/>
            <person name="Kyrpides N."/>
            <person name="Mikhailova N."/>
            <person name="Nelson K."/>
            <person name="Gogarten J.P."/>
            <person name="Noll K."/>
            <person name="Richardson P."/>
        </authorList>
    </citation>
    <scope>NUCLEOTIDE SEQUENCE [LARGE SCALE GENOMIC DNA]</scope>
    <source>
        <strain>ATCC BAA-301 / DSM 14385 / NBRC 107922 / TMO</strain>
    </source>
</reference>
<feature type="chain" id="PRO_1000059090" description="Aminomethyltransferase">
    <location>
        <begin position="1"/>
        <end position="362"/>
    </location>
</feature>
<proteinExistence type="inferred from homology"/>
<organism>
    <name type="scientific">Pseudothermotoga lettingae (strain ATCC BAA-301 / DSM 14385 / NBRC 107922 / TMO)</name>
    <name type="common">Thermotoga lettingae</name>
    <dbReference type="NCBI Taxonomy" id="416591"/>
    <lineage>
        <taxon>Bacteria</taxon>
        <taxon>Thermotogati</taxon>
        <taxon>Thermotogota</taxon>
        <taxon>Thermotogae</taxon>
        <taxon>Thermotogales</taxon>
        <taxon>Thermotogaceae</taxon>
        <taxon>Pseudothermotoga</taxon>
    </lineage>
</organism>